<organism>
    <name type="scientific">Phocaeicola vulgatus (strain ATCC 8482 / DSM 1447 / JCM 5826 / CCUG 4940 / NBRC 14291 / NCTC 11154)</name>
    <name type="common">Bacteroides vulgatus</name>
    <dbReference type="NCBI Taxonomy" id="435590"/>
    <lineage>
        <taxon>Bacteria</taxon>
        <taxon>Pseudomonadati</taxon>
        <taxon>Bacteroidota</taxon>
        <taxon>Bacteroidia</taxon>
        <taxon>Bacteroidales</taxon>
        <taxon>Bacteroidaceae</taxon>
        <taxon>Phocaeicola</taxon>
    </lineage>
</organism>
<proteinExistence type="inferred from homology"/>
<accession>A6KXL8</accession>
<feature type="chain" id="PRO_1000022899" description="2-C-methyl-D-erythritol 4-phosphate cytidylyltransferase">
    <location>
        <begin position="1"/>
        <end position="219"/>
    </location>
</feature>
<feature type="site" description="Transition state stabilizer" evidence="1">
    <location>
        <position position="15"/>
    </location>
</feature>
<feature type="site" description="Transition state stabilizer" evidence="1">
    <location>
        <position position="22"/>
    </location>
</feature>
<feature type="site" description="Positions MEP for the nucleophilic attack" evidence="1">
    <location>
        <position position="151"/>
    </location>
</feature>
<feature type="site" description="Positions MEP for the nucleophilic attack" evidence="1">
    <location>
        <position position="205"/>
    </location>
</feature>
<protein>
    <recommendedName>
        <fullName evidence="1">2-C-methyl-D-erythritol 4-phosphate cytidylyltransferase</fullName>
        <ecNumber evidence="1">2.7.7.60</ecNumber>
    </recommendedName>
    <alternativeName>
        <fullName evidence="1">4-diphosphocytidyl-2C-methyl-D-erythritol synthase</fullName>
    </alternativeName>
    <alternativeName>
        <fullName evidence="1">MEP cytidylyltransferase</fullName>
        <shortName evidence="1">MCT</shortName>
    </alternativeName>
</protein>
<name>ISPD_PHOV8</name>
<evidence type="ECO:0000255" key="1">
    <source>
        <dbReference type="HAMAP-Rule" id="MF_00108"/>
    </source>
</evidence>
<reference key="1">
    <citation type="journal article" date="2007" name="PLoS Biol.">
        <title>Evolution of symbiotic bacteria in the distal human intestine.</title>
        <authorList>
            <person name="Xu J."/>
            <person name="Mahowald M.A."/>
            <person name="Ley R.E."/>
            <person name="Lozupone C.A."/>
            <person name="Hamady M."/>
            <person name="Martens E.C."/>
            <person name="Henrissat B."/>
            <person name="Coutinho P.M."/>
            <person name="Minx P."/>
            <person name="Latreille P."/>
            <person name="Cordum H."/>
            <person name="Van Brunt A."/>
            <person name="Kim K."/>
            <person name="Fulton R.S."/>
            <person name="Fulton L.A."/>
            <person name="Clifton S.W."/>
            <person name="Wilson R.K."/>
            <person name="Knight R.D."/>
            <person name="Gordon J.I."/>
        </authorList>
    </citation>
    <scope>NUCLEOTIDE SEQUENCE [LARGE SCALE GENOMIC DNA]</scope>
    <source>
        <strain>ATCC 8482 / DSM 1447 / JCM 5826 / CCUG 4940 / NBRC 14291 / NCTC 11154</strain>
    </source>
</reference>
<comment type="function">
    <text evidence="1">Catalyzes the formation of 4-diphosphocytidyl-2-C-methyl-D-erythritol from CTP and 2-C-methyl-D-erythritol 4-phosphate (MEP).</text>
</comment>
<comment type="catalytic activity">
    <reaction evidence="1">
        <text>2-C-methyl-D-erythritol 4-phosphate + CTP + H(+) = 4-CDP-2-C-methyl-D-erythritol + diphosphate</text>
        <dbReference type="Rhea" id="RHEA:13429"/>
        <dbReference type="ChEBI" id="CHEBI:15378"/>
        <dbReference type="ChEBI" id="CHEBI:33019"/>
        <dbReference type="ChEBI" id="CHEBI:37563"/>
        <dbReference type="ChEBI" id="CHEBI:57823"/>
        <dbReference type="ChEBI" id="CHEBI:58262"/>
        <dbReference type="EC" id="2.7.7.60"/>
    </reaction>
</comment>
<comment type="pathway">
    <text evidence="1">Isoprenoid biosynthesis; isopentenyl diphosphate biosynthesis via DXP pathway; isopentenyl diphosphate from 1-deoxy-D-xylulose 5-phosphate: step 2/6.</text>
</comment>
<comment type="similarity">
    <text evidence="1">Belongs to the IspD/TarI cytidylyltransferase family. IspD subfamily.</text>
</comment>
<keyword id="KW-0414">Isoprene biosynthesis</keyword>
<keyword id="KW-0548">Nucleotidyltransferase</keyword>
<keyword id="KW-0808">Transferase</keyword>
<gene>
    <name evidence="1" type="primary">ispD</name>
    <name type="ordered locus">BVU_0472</name>
</gene>
<dbReference type="EC" id="2.7.7.60" evidence="1"/>
<dbReference type="EMBL" id="CP000139">
    <property type="protein sequence ID" value="ABR38182.1"/>
    <property type="molecule type" value="Genomic_DNA"/>
</dbReference>
<dbReference type="RefSeq" id="WP_005840789.1">
    <property type="nucleotide sequence ID" value="NZ_JANSWM010000025.1"/>
</dbReference>
<dbReference type="SMR" id="A6KXL8"/>
<dbReference type="STRING" id="435590.BVU_0472"/>
<dbReference type="PaxDb" id="435590-BVU_0472"/>
<dbReference type="GeneID" id="5301441"/>
<dbReference type="KEGG" id="bvu:BVU_0472"/>
<dbReference type="eggNOG" id="COG1211">
    <property type="taxonomic scope" value="Bacteria"/>
</dbReference>
<dbReference type="HOGENOM" id="CLU_061281_2_2_10"/>
<dbReference type="BioCyc" id="BVUL435590:G1G59-498-MONOMER"/>
<dbReference type="UniPathway" id="UPA00056">
    <property type="reaction ID" value="UER00093"/>
</dbReference>
<dbReference type="Proteomes" id="UP000002861">
    <property type="component" value="Chromosome"/>
</dbReference>
<dbReference type="GO" id="GO:0050518">
    <property type="term" value="F:2-C-methyl-D-erythritol 4-phosphate cytidylyltransferase activity"/>
    <property type="evidence" value="ECO:0007669"/>
    <property type="project" value="UniProtKB-UniRule"/>
</dbReference>
<dbReference type="GO" id="GO:0019288">
    <property type="term" value="P:isopentenyl diphosphate biosynthetic process, methylerythritol 4-phosphate pathway"/>
    <property type="evidence" value="ECO:0007669"/>
    <property type="project" value="UniProtKB-UniRule"/>
</dbReference>
<dbReference type="CDD" id="cd02516">
    <property type="entry name" value="CDP-ME_synthetase"/>
    <property type="match status" value="1"/>
</dbReference>
<dbReference type="FunFam" id="3.90.550.10:FF:000003">
    <property type="entry name" value="2-C-methyl-D-erythritol 4-phosphate cytidylyltransferase"/>
    <property type="match status" value="1"/>
</dbReference>
<dbReference type="Gene3D" id="3.90.550.10">
    <property type="entry name" value="Spore Coat Polysaccharide Biosynthesis Protein SpsA, Chain A"/>
    <property type="match status" value="1"/>
</dbReference>
<dbReference type="HAMAP" id="MF_00108">
    <property type="entry name" value="IspD"/>
    <property type="match status" value="1"/>
</dbReference>
<dbReference type="InterPro" id="IPR001228">
    <property type="entry name" value="IspD"/>
</dbReference>
<dbReference type="InterPro" id="IPR034683">
    <property type="entry name" value="IspD/TarI"/>
</dbReference>
<dbReference type="InterPro" id="IPR050088">
    <property type="entry name" value="IspD/TarI_cytidylyltransf_bact"/>
</dbReference>
<dbReference type="InterPro" id="IPR029044">
    <property type="entry name" value="Nucleotide-diphossugar_trans"/>
</dbReference>
<dbReference type="NCBIfam" id="TIGR00453">
    <property type="entry name" value="ispD"/>
    <property type="match status" value="1"/>
</dbReference>
<dbReference type="NCBIfam" id="NF001186">
    <property type="entry name" value="PRK00155.2-3"/>
    <property type="match status" value="1"/>
</dbReference>
<dbReference type="PANTHER" id="PTHR32125">
    <property type="entry name" value="2-C-METHYL-D-ERYTHRITOL 4-PHOSPHATE CYTIDYLYLTRANSFERASE, CHLOROPLASTIC"/>
    <property type="match status" value="1"/>
</dbReference>
<dbReference type="PANTHER" id="PTHR32125:SF4">
    <property type="entry name" value="2-C-METHYL-D-ERYTHRITOL 4-PHOSPHATE CYTIDYLYLTRANSFERASE, CHLOROPLASTIC"/>
    <property type="match status" value="1"/>
</dbReference>
<dbReference type="Pfam" id="PF01128">
    <property type="entry name" value="IspD"/>
    <property type="match status" value="1"/>
</dbReference>
<dbReference type="SUPFAM" id="SSF53448">
    <property type="entry name" value="Nucleotide-diphospho-sugar transferases"/>
    <property type="match status" value="1"/>
</dbReference>
<sequence length="219" mass="24343">MNRHVIIVAGGKGLRMGGDIPKQFLPVGGKPVLMRTIEAFYAFDSSMHIILVLPVSQQAYWKDLCETYHFALRHDIADGGETRFHSVKNGLAYVKGEGLVGVHDGVRPFVSREVIAGCYEAAQTKQAVIPVIDVVETVRHLTKPGSETVPRNDYKLVQTPQVFEVQLLKEAYQQEYTDAFTDDASVVEAMGREVCLVQGNRENIKLTTPFDLKIAEVLI</sequence>